<organism>
    <name type="scientific">Lactococcus phage P008</name>
    <dbReference type="NCBI Taxonomy" id="83129"/>
    <lineage>
        <taxon>Viruses</taxon>
        <taxon>Duplodnaviria</taxon>
        <taxon>Heunggongvirae</taxon>
        <taxon>Uroviricota</taxon>
        <taxon>Caudoviricetes</taxon>
        <taxon>Skunavirus</taxon>
    </lineage>
</organism>
<reference key="1">
    <citation type="journal article" date="2006" name="FEMS Microbiol. Lett.">
        <title>Sequence and comparative genomic analysis of lactococcal bacteriophages jj50, 712 and P008: evolutionary insights into the 936 phage species.</title>
        <authorList>
            <person name="Mahony J."/>
            <person name="Deveau H."/>
            <person name="Mc Grath S."/>
            <person name="Ventura M."/>
            <person name="Canchaya C."/>
            <person name="Moineau S."/>
            <person name="Fitzgerald G.F."/>
            <person name="van Sinderen D."/>
        </authorList>
    </citation>
    <scope>NUCLEOTIDE SEQUENCE [GENOMIC DNA]</scope>
</reference>
<reference key="2">
    <citation type="journal article" date="2013" name="J. Bacteriol.">
        <title>Effect of the abortive infection mechanism and type III toxin/antitoxin system AbiQ on the lytic cycle of Lactococcus lactis phages.</title>
        <authorList>
            <person name="Samson J.E."/>
            <person name="Belanger M."/>
            <person name="Moineau S."/>
        </authorList>
    </citation>
    <scope>FUNCTION</scope>
    <scope>IDENTIFICATION BY MASS SPECTROMETRY</scope>
    <scope>INDUCTION</scope>
    <scope>DISRUPTION PHENOTYPE</scope>
    <scope>POLYMORPHISM</scope>
    <scope>VARIANTS ILE-3; GLY-6; ASN-18; GLY-23; 30-TRP--ASN-71 DEL; LEU-38 AND PRO-49</scope>
    <scope>CHARACTERIZATION OF VARIANTS ILE-3; GLY-6; ASN-18; GLY-23; 30-TRP--ASN-71 DEL; LEU-38 AND PRO-49</scope>
</reference>
<name>GP38_BPLP0</name>
<proteinExistence type="evidence at protein level"/>
<gene>
    <name evidence="2" type="ORF">orf38</name>
</gene>
<organismHost>
    <name type="scientific">Lactococcus lactis subsp. lactis (strain IL1403)</name>
    <name type="common">Streptococcus lactis</name>
    <dbReference type="NCBI Taxonomy" id="272623"/>
</organismHost>
<protein>
    <recommendedName>
        <fullName evidence="3">Gene product 38</fullName>
        <shortName>gp38</shortName>
    </recommendedName>
    <alternativeName>
        <fullName evidence="3">AbiQ resistance protein</fullName>
    </alternativeName>
    <alternativeName>
        <fullName evidence="2">ORF38</fullName>
    </alternativeName>
</protein>
<sequence length="71" mass="8306">MYTAEEREQIIDIVDKMSLLRQDFDGAFTWIKENVAMPFDFDGEQQFISDLKQLVKINALKFGKIYEGVLN</sequence>
<feature type="chain" id="PRO_0000432938" description="Gene product 38">
    <location>
        <begin position="1"/>
        <end position="71"/>
    </location>
</feature>
<feature type="sequence variant" description="In P008H2-10; confers partial resistance to bacterial AbiQ." evidence="1">
    <original>T</original>
    <variation>I</variation>
    <location>
        <position position="3"/>
    </location>
</feature>
<feature type="sequence variant" description="In P008H2-7; confers partial resistance to bacterial AbiQ." evidence="1">
    <original>E</original>
    <variation>G</variation>
    <location>
        <position position="6"/>
    </location>
</feature>
<feature type="sequence variant" description="In P008-Q4; confers partial resistance to bacterial AbiQ." evidence="1">
    <original>S</original>
    <variation>N</variation>
    <location>
        <position position="18"/>
    </location>
</feature>
<feature type="sequence variant" description="In P008-Q16; confers partial resistance to bacterial AbiQ." evidence="1">
    <original>D</original>
    <variation>G</variation>
    <location>
        <position position="23"/>
    </location>
</feature>
<feature type="sequence variant" description="In P008-Q19; confers partial resistance to bacterial AbiQ." evidence="1">
    <location>
        <begin position="30"/>
        <end position="71"/>
    </location>
</feature>
<feature type="sequence variant" description="In P008-Q12; confers partial resistance to bacterial AbiQ, altered expression profile of virus gene orf53, reduced virus burst size, longer lytic cycle, i.e. reduced fitness." evidence="1">
    <original>P</original>
    <variation>L</variation>
    <location>
        <position position="38"/>
    </location>
</feature>
<feature type="sequence variant" description="In P008-Q11; confers partial resistance to bacterial AbiQ." evidence="1">
    <original>S</original>
    <variation>P</variation>
    <location>
        <position position="49"/>
    </location>
</feature>
<accession>Q09YD1</accession>
<dbReference type="EMBL" id="DQ054536">
    <property type="protein sequence ID" value="AAY97840.1"/>
    <property type="molecule type" value="Genomic_DNA"/>
</dbReference>
<dbReference type="RefSeq" id="YP_762549.1">
    <property type="nucleotide sequence ID" value="NC_008363.1"/>
</dbReference>
<dbReference type="SMR" id="Q09YD1"/>
<dbReference type="KEGG" id="vg:5141185"/>
<dbReference type="OrthoDB" id="21854at10239"/>
<dbReference type="Proteomes" id="UP000000910">
    <property type="component" value="Segment"/>
</dbReference>
<dbReference type="InterPro" id="IPR054372">
    <property type="entry name" value="Gp38-like"/>
</dbReference>
<dbReference type="Pfam" id="PF22130">
    <property type="entry name" value="Phage_gp38"/>
    <property type="match status" value="1"/>
</dbReference>
<evidence type="ECO:0000269" key="1">
    <source>
    </source>
</evidence>
<evidence type="ECO:0000303" key="2">
    <source>
    </source>
</evidence>
<evidence type="ECO:0000305" key="3"/>
<evidence type="ECO:0000305" key="4">
    <source>
    </source>
</evidence>
<comment type="function">
    <text evidence="4">Involved in escape from killing mediated by the bacterial AbiQ protein upon infection of L.lactis subsp. lactis strain IL1403. 11 distinct mutations in the protein and 2 in the ribosome-binding site confer on the virus the ability to partially escape killing (i.e. the virus grows in the bacteria), in some cases probably by decreasing the protein level. At least one of these variants (Leu-38) has reduced fitness compared to the wild-type strain.</text>
</comment>
<comment type="induction">
    <text evidence="1">Expressed early in the viral replication cycle (at protein level). Transcript is detected 2 minutes after infection, peaks at 10 minutes and is degraded to a smaller size by 20 minutes. Some smaller transcripts were detected in bacteria expressing AbiQ (AC Q9ZJ19).</text>
</comment>
<comment type="polymorphism">
    <text evidence="1">Variant P008-Q1, mutation of the ATG start codon to TTG encoding Leu (a less efficient start codon in the host L.lactis), confers partial resistance to bacterial AbiQ. A silent mutation in variant P008-Q5 of one Thr codon to another (ACA to ACC, ACC is half as frequent in the virus and thus probably less efficiently translated) also confers partial resistance to bacterial AbiQ.</text>
</comment>
<comment type="disruption phenotype">
    <text evidence="1">Cannot be generated, suggesting it is essential for virus function.</text>
</comment>
<keyword id="KW-0244">Early protein</keyword>
<keyword id="KW-1185">Reference proteome</keyword>